<gene>
    <name type="ordered locus">Os02g0764100</name>
    <name type="ordered locus">LOC_Os02g52620</name>
</gene>
<name>Y2641_ORYSJ</name>
<reference key="1">
    <citation type="journal article" date="2005" name="Nature">
        <title>The map-based sequence of the rice genome.</title>
        <authorList>
            <consortium name="International rice genome sequencing project (IRGSP)"/>
        </authorList>
    </citation>
    <scope>NUCLEOTIDE SEQUENCE [LARGE SCALE GENOMIC DNA]</scope>
    <source>
        <strain>cv. Nipponbare</strain>
    </source>
</reference>
<reference key="2">
    <citation type="journal article" date="2008" name="Nucleic Acids Res.">
        <title>The rice annotation project database (RAP-DB): 2008 update.</title>
        <authorList>
            <consortium name="The rice annotation project (RAP)"/>
        </authorList>
    </citation>
    <scope>GENOME REANNOTATION</scope>
    <source>
        <strain>cv. Nipponbare</strain>
    </source>
</reference>
<reference key="3">
    <citation type="journal article" date="2013" name="Rice">
        <title>Improvement of the Oryza sativa Nipponbare reference genome using next generation sequence and optical map data.</title>
        <authorList>
            <person name="Kawahara Y."/>
            <person name="de la Bastide M."/>
            <person name="Hamilton J.P."/>
            <person name="Kanamori H."/>
            <person name="McCombie W.R."/>
            <person name="Ouyang S."/>
            <person name="Schwartz D.C."/>
            <person name="Tanaka T."/>
            <person name="Wu J."/>
            <person name="Zhou S."/>
            <person name="Childs K.L."/>
            <person name="Davidson R.M."/>
            <person name="Lin H."/>
            <person name="Quesada-Ocampo L."/>
            <person name="Vaillancourt B."/>
            <person name="Sakai H."/>
            <person name="Lee S.S."/>
            <person name="Kim J."/>
            <person name="Numa H."/>
            <person name="Itoh T."/>
            <person name="Buell C.R."/>
            <person name="Matsumoto T."/>
        </authorList>
    </citation>
    <scope>GENOME REANNOTATION</scope>
    <source>
        <strain>cv. Nipponbare</strain>
    </source>
</reference>
<organism>
    <name type="scientific">Oryza sativa subsp. japonica</name>
    <name type="common">Rice</name>
    <dbReference type="NCBI Taxonomy" id="39947"/>
    <lineage>
        <taxon>Eukaryota</taxon>
        <taxon>Viridiplantae</taxon>
        <taxon>Streptophyta</taxon>
        <taxon>Embryophyta</taxon>
        <taxon>Tracheophyta</taxon>
        <taxon>Spermatophyta</taxon>
        <taxon>Magnoliopsida</taxon>
        <taxon>Liliopsida</taxon>
        <taxon>Poales</taxon>
        <taxon>Poaceae</taxon>
        <taxon>BOP clade</taxon>
        <taxon>Oryzoideae</taxon>
        <taxon>Oryzeae</taxon>
        <taxon>Oryzinae</taxon>
        <taxon>Oryza</taxon>
        <taxon>Oryza sativa</taxon>
    </lineage>
</organism>
<proteinExistence type="inferred from homology"/>
<comment type="subcellular location">
    <subcellularLocation>
        <location evidence="1">Nucleus</location>
    </subcellularLocation>
</comment>
<comment type="sequence caution" evidence="2">
    <conflict type="erroneous gene model prediction">
        <sequence resource="EMBL-CDS" id="BAF10127"/>
    </conflict>
</comment>
<protein>
    <recommendedName>
        <fullName>B3 domain-containing protein Os02g0764100</fullName>
    </recommendedName>
</protein>
<keyword id="KW-0238">DNA-binding</keyword>
<keyword id="KW-0539">Nucleus</keyword>
<keyword id="KW-1185">Reference proteome</keyword>
<keyword id="KW-0804">Transcription</keyword>
<keyword id="KW-0805">Transcription regulation</keyword>
<accession>Q0DXB1</accession>
<evidence type="ECO:0000255" key="1">
    <source>
        <dbReference type="PROSITE-ProRule" id="PRU00326"/>
    </source>
</evidence>
<evidence type="ECO:0000305" key="2"/>
<sequence length="190" mass="21047">MGARAQPTPSWAREPLFEKAVTPSDVGKLNRLLVPKQHAEKHFPLRRTSSDASGVLLNFEDGEGKVWRFRYSCWNSSQSYVLTKGWSRFVREKGLRAGDTIVFSGSAYGPDKLLFIDCKKNNTAAATGDEKPITSGEATRVVRLFGMDITGGGGDCRKRERAVEMGQEAFLMKRQCVVHQRTPALGALLL</sequence>
<feature type="chain" id="PRO_0000376948" description="B3 domain-containing protein Os02g0764100">
    <location>
        <begin position="1"/>
        <end position="190"/>
    </location>
</feature>
<feature type="DNA-binding region" description="TF-B3" evidence="1">
    <location>
        <begin position="17"/>
        <end position="121"/>
    </location>
</feature>
<dbReference type="EMBL" id="AP008208">
    <property type="protein sequence ID" value="BAF10127.1"/>
    <property type="status" value="ALT_SEQ"/>
    <property type="molecule type" value="Genomic_DNA"/>
</dbReference>
<dbReference type="EMBL" id="AP014958">
    <property type="status" value="NOT_ANNOTATED_CDS"/>
    <property type="molecule type" value="Genomic_DNA"/>
</dbReference>
<dbReference type="SMR" id="Q0DXB1"/>
<dbReference type="FunCoup" id="Q0DXB1">
    <property type="interactions" value="1"/>
</dbReference>
<dbReference type="PaxDb" id="39947-Q0DXB1"/>
<dbReference type="eggNOG" id="ENOG502QRVI">
    <property type="taxonomic scope" value="Eukaryota"/>
</dbReference>
<dbReference type="InParanoid" id="Q0DXB1"/>
<dbReference type="Proteomes" id="UP000000763">
    <property type="component" value="Chromosome 2"/>
</dbReference>
<dbReference type="Proteomes" id="UP000059680">
    <property type="component" value="Chromosome 2"/>
</dbReference>
<dbReference type="GO" id="GO:0005634">
    <property type="term" value="C:nucleus"/>
    <property type="evidence" value="ECO:0007669"/>
    <property type="project" value="UniProtKB-SubCell"/>
</dbReference>
<dbReference type="GO" id="GO:0003677">
    <property type="term" value="F:DNA binding"/>
    <property type="evidence" value="ECO:0007669"/>
    <property type="project" value="UniProtKB-KW"/>
</dbReference>
<dbReference type="GO" id="GO:0003700">
    <property type="term" value="F:DNA-binding transcription factor activity"/>
    <property type="evidence" value="ECO:0007669"/>
    <property type="project" value="InterPro"/>
</dbReference>
<dbReference type="CDD" id="cd10017">
    <property type="entry name" value="B3_DNA"/>
    <property type="match status" value="1"/>
</dbReference>
<dbReference type="Gene3D" id="2.40.330.10">
    <property type="entry name" value="DNA-binding pseudobarrel domain"/>
    <property type="match status" value="1"/>
</dbReference>
<dbReference type="InterPro" id="IPR003340">
    <property type="entry name" value="B3_DNA-bd"/>
</dbReference>
<dbReference type="InterPro" id="IPR015300">
    <property type="entry name" value="DNA-bd_pseudobarrel_sf"/>
</dbReference>
<dbReference type="InterPro" id="IPR044800">
    <property type="entry name" value="LEC2-like"/>
</dbReference>
<dbReference type="PANTHER" id="PTHR31140:SF56">
    <property type="entry name" value="AP2_ERF AND B3 DOMAIN-CONTAINING PROTEIN OS01G0141000"/>
    <property type="match status" value="1"/>
</dbReference>
<dbReference type="PANTHER" id="PTHR31140">
    <property type="entry name" value="B3 DOMAIN-CONTAINING TRANSCRIPTION FACTOR ABI3"/>
    <property type="match status" value="1"/>
</dbReference>
<dbReference type="Pfam" id="PF02362">
    <property type="entry name" value="B3"/>
    <property type="match status" value="1"/>
</dbReference>
<dbReference type="SMART" id="SM01019">
    <property type="entry name" value="B3"/>
    <property type="match status" value="1"/>
</dbReference>
<dbReference type="SUPFAM" id="SSF101936">
    <property type="entry name" value="DNA-binding pseudobarrel domain"/>
    <property type="match status" value="1"/>
</dbReference>
<dbReference type="PROSITE" id="PS50863">
    <property type="entry name" value="B3"/>
    <property type="match status" value="1"/>
</dbReference>